<feature type="peptide" id="PRO_0000045019" description="Kappa-sparatoxin-Hv1a" evidence="2 3">
    <location>
        <begin position="1"/>
        <end position="33"/>
    </location>
</feature>
<feature type="modified residue" description="Tryptophan amide" evidence="2">
    <location>
        <position position="33"/>
    </location>
</feature>
<feature type="disulfide bond" evidence="1">
    <location>
        <begin position="2"/>
        <end position="17"/>
    </location>
</feature>
<feature type="disulfide bond" evidence="1">
    <location>
        <begin position="9"/>
        <end position="22"/>
    </location>
</feature>
<feature type="disulfide bond" evidence="1">
    <location>
        <begin position="16"/>
        <end position="27"/>
    </location>
</feature>
<proteinExistence type="evidence at protein level"/>
<accession>P58425</accession>
<sequence length="33" mass="3917">DCGTIWHYCGTDQSECCEGWKCSRQLCKYVIDW</sequence>
<organism>
    <name type="scientific">Heteropoda venatoria</name>
    <name type="common">Brown huntsman spider</name>
    <name type="synonym">Aranea venatoria</name>
    <dbReference type="NCBI Taxonomy" id="152925"/>
    <lineage>
        <taxon>Eukaryota</taxon>
        <taxon>Metazoa</taxon>
        <taxon>Ecdysozoa</taxon>
        <taxon>Arthropoda</taxon>
        <taxon>Chelicerata</taxon>
        <taxon>Arachnida</taxon>
        <taxon>Araneae</taxon>
        <taxon>Araneomorphae</taxon>
        <taxon>Entelegynae</taxon>
        <taxon>Dionycha</taxon>
        <taxon>Sparassidae</taxon>
        <taxon>Heteropoda</taxon>
    </lineage>
</organism>
<protein>
    <recommendedName>
        <fullName evidence="4">Kappa-sparatoxin-Hv1a</fullName>
        <shortName evidence="4">Kappa-SPRTX-Hv1a</shortName>
    </recommendedName>
    <alternativeName>
        <fullName>Heteropodatoxin-1</fullName>
        <shortName>HpTX1</shortName>
    </alternativeName>
    <alternativeName>
        <fullName>Toxin AU3/KJ5</fullName>
    </alternativeName>
</protein>
<name>TXHP1_HETVE</name>
<evidence type="ECO:0000250" key="1">
    <source>
        <dbReference type="UniProtKB" id="P58426"/>
    </source>
</evidence>
<evidence type="ECO:0000269" key="2">
    <source>
    </source>
</evidence>
<evidence type="ECO:0000269" key="3">
    <source ref="2"/>
</evidence>
<evidence type="ECO:0000305" key="4"/>
<evidence type="ECO:0000305" key="5">
    <source>
    </source>
</evidence>
<evidence type="ECO:0000305" key="6">
    <source ref="2"/>
</evidence>
<comment type="function">
    <text evidence="2 3">Blocks transient outward voltage-gated potassium channels in rat ventricular myocytes (thus prolonging action-potential duration) and rat Kv4.2/KCNA4 channels expressed in Xenopus oocytes. Is also a weak blocker of calcium channels in rat cerebellar granule cells.</text>
</comment>
<comment type="subcellular location">
    <subcellularLocation>
        <location evidence="2 3">Secreted</location>
    </subcellularLocation>
</comment>
<comment type="tissue specificity">
    <text evidence="5 6">Expressed by the venom gland.</text>
</comment>
<comment type="domain">
    <text evidence="1">The presence of a 'disulfide through disulfide knot' structurally defines this protein as a knottin.</text>
</comment>
<comment type="mass spectrometry" mass="3910.57" method="Electrospray" evidence="2"/>
<comment type="mass spectrometry" mass="3909.94" method="Electrospray" evidence="3"/>
<comment type="similarity">
    <text evidence="4">Belongs to the neurotoxin 10 (Hwtx-1) family. 21 (HpTx1) subfamily.</text>
</comment>
<keyword id="KW-0027">Amidation</keyword>
<keyword id="KW-0108">Calcium channel impairing toxin</keyword>
<keyword id="KW-0903">Direct protein sequencing</keyword>
<keyword id="KW-1015">Disulfide bond</keyword>
<keyword id="KW-0872">Ion channel impairing toxin</keyword>
<keyword id="KW-0960">Knottin</keyword>
<keyword id="KW-0528">Neurotoxin</keyword>
<keyword id="KW-0632">Potassium channel impairing toxin</keyword>
<keyword id="KW-0964">Secreted</keyword>
<keyword id="KW-0800">Toxin</keyword>
<keyword id="KW-1220">Voltage-gated potassium channel impairing toxin</keyword>
<reference key="1">
    <citation type="journal article" date="1997" name="Mol. Pharmacol.">
        <title>Heteropodatoxins: peptides isolated from spider venom that block Kv4.2 potassium channels.</title>
        <authorList>
            <person name="Sanguinetti M.C."/>
            <person name="Johnson J.H."/>
            <person name="Hammerland L.G."/>
            <person name="Kelbaugh P.R."/>
            <person name="Volkmann R.A."/>
            <person name="Saccomano N.A."/>
            <person name="Mueller A.L."/>
        </authorList>
    </citation>
    <scope>PROTEIN SEQUENCE</scope>
    <scope>FUNCTION ON POTASSIUM CHANNELS</scope>
    <scope>SUBCELLULAR LOCATION</scope>
    <scope>AMIDATION AT TRP-33</scope>
    <scope>MASS SPECTROMETRY</scope>
    <source>
        <tissue>Venom</tissue>
    </source>
</reference>
<reference key="2">
    <citation type="patent" date="1997-05-06" number="US5627154">
        <title>Calcium channel blocking polypeptides from Heteropoda venatoria.</title>
        <authorList>
            <person name="Kelbaugh P.R."/>
            <person name="Saccomano N.A."/>
            <person name="Volkmann R.A."/>
        </authorList>
    </citation>
    <scope>PROTEIN SEQUENCE</scope>
    <scope>FUNCTION ON CALCIUM CHANNELS</scope>
    <scope>SUBCELLULAR LOCATION</scope>
    <scope>DISULFIDE BONDS</scope>
    <scope>MASS SPECTROMETRY</scope>
    <source>
        <tissue>Venom</tissue>
    </source>
</reference>
<dbReference type="SMR" id="P58425"/>
<dbReference type="ArachnoServer" id="AS000344">
    <property type="toxin name" value="kappa-sparatoxin-Hv1a"/>
</dbReference>
<dbReference type="GO" id="GO:0005576">
    <property type="term" value="C:extracellular region"/>
    <property type="evidence" value="ECO:0007669"/>
    <property type="project" value="UniProtKB-SubCell"/>
</dbReference>
<dbReference type="GO" id="GO:0005246">
    <property type="term" value="F:calcium channel regulator activity"/>
    <property type="evidence" value="ECO:0007669"/>
    <property type="project" value="UniProtKB-KW"/>
</dbReference>
<dbReference type="GO" id="GO:0008200">
    <property type="term" value="F:ion channel inhibitor activity"/>
    <property type="evidence" value="ECO:0007669"/>
    <property type="project" value="InterPro"/>
</dbReference>
<dbReference type="GO" id="GO:0015459">
    <property type="term" value="F:potassium channel regulator activity"/>
    <property type="evidence" value="ECO:0007669"/>
    <property type="project" value="UniProtKB-KW"/>
</dbReference>
<dbReference type="GO" id="GO:0090729">
    <property type="term" value="F:toxin activity"/>
    <property type="evidence" value="ECO:0007669"/>
    <property type="project" value="UniProtKB-KW"/>
</dbReference>
<dbReference type="InterPro" id="IPR011696">
    <property type="entry name" value="Huwentoxin-1"/>
</dbReference>
<dbReference type="Pfam" id="PF07740">
    <property type="entry name" value="Toxin_12"/>
    <property type="match status" value="1"/>
</dbReference>